<protein>
    <recommendedName>
        <fullName>Flagellin</fullName>
    </recommendedName>
    <alternativeName>
        <fullName>Phase 1-C flagellin</fullName>
    </alternativeName>
</protein>
<comment type="function">
    <text>Flagellin is the subunit protein which polymerizes to form the filaments of bacterial flagella.</text>
</comment>
<comment type="subcellular location">
    <subcellularLocation>
        <location>Secreted</location>
    </subcellularLocation>
    <subcellularLocation>
        <location>Bacterial flagellum</location>
    </subcellularLocation>
</comment>
<comment type="miscellaneous">
    <text>Individual Salmonella serotypes usually alternate between the production of 2 antigenic forms of flagella, termed phase 1 and phase 2, each specified by separate structural genes.</text>
</comment>
<comment type="similarity">
    <text evidence="2">Belongs to the bacterial flagellin family.</text>
</comment>
<accession>Q06973</accession>
<sequence>MAQVINTNSLSLLTQNNLNKSQSSLSSAIERLSSGLRINSAKDDAAGQAIANRFTSNIKGLTQASRNANDGISIAQTTEGALNEINNNLQRVRELSVQATNGTNSDSDLKSIQDEIQQRLEEIDRVSNQTQFNGVKVLSQDNQMKIQVGANDGETITIDLQKIDVKSLGLDGFNVNGPKEATVGDLKSSFKNVTGYDTYAAGANKYRVDINSGAVVTDDAAPDKVYVNAANGQLTTDDAENNTAVNLFKTTKSAAGTDEAKAIAGAIKGGKEGDTFDYKGVTFTIDTKTGDDGNGKVSTTINGEKVTLTVADIATGATDVNAATLQSSKNVYTSVVNGQFTFDDKTKNESAKLSDLEANNAVKGESKITVNGAEYTANAAGDKVTLAGKTMFIDKTASGVSTLINEDAAAAKKSTANPLASIDSALSKVDAVRSSLGAIQNRFDSAITNLGNTVTNLNSARSRIEDADYATEVSNMSKAQILQQAGTSVLAQANQVPQNVLSLLR</sequence>
<proteinExistence type="inferred from homology"/>
<keyword id="KW-0975">Bacterial flagellum</keyword>
<keyword id="KW-0964">Secreted</keyword>
<feature type="initiator methionine" description="Removed" evidence="1">
    <location>
        <position position="1"/>
    </location>
</feature>
<feature type="chain" id="PRO_0000182571" description="Flagellin">
    <location>
        <begin position="2"/>
        <end position="505"/>
    </location>
</feature>
<reference key="1">
    <citation type="journal article" date="1993" name="J. Bacteriol.">
        <title>Molecular analyses of the Salmonella g. flagellar antigen complex.</title>
        <authorList>
            <person name="Masten B.J."/>
            <person name="Joys T.M."/>
        </authorList>
    </citation>
    <scope>NUCLEOTIDE SEQUENCE [GENOMIC DNA]</scope>
    <source>
        <strain>ATCC 8387</strain>
    </source>
</reference>
<organism>
    <name type="scientific">Salmonella montevideo</name>
    <dbReference type="NCBI Taxonomy" id="115981"/>
    <lineage>
        <taxon>Bacteria</taxon>
        <taxon>Pseudomonadati</taxon>
        <taxon>Pseudomonadota</taxon>
        <taxon>Gammaproteobacteria</taxon>
        <taxon>Enterobacterales</taxon>
        <taxon>Enterobacteriaceae</taxon>
        <taxon>Salmonella</taxon>
    </lineage>
</organism>
<dbReference type="EMBL" id="Z15069">
    <property type="protein sequence ID" value="CAA78778.1"/>
    <property type="molecule type" value="Genomic_DNA"/>
</dbReference>
<dbReference type="PIR" id="S33190">
    <property type="entry name" value="S33190"/>
</dbReference>
<dbReference type="RefSeq" id="WP_000079838.1">
    <property type="nucleotide sequence ID" value="NZ_VCTO02000009.1"/>
</dbReference>
<dbReference type="SMR" id="Q06973"/>
<dbReference type="GO" id="GO:0009288">
    <property type="term" value="C:bacterial-type flagellum"/>
    <property type="evidence" value="ECO:0007669"/>
    <property type="project" value="UniProtKB-SubCell"/>
</dbReference>
<dbReference type="GO" id="GO:0005576">
    <property type="term" value="C:extracellular region"/>
    <property type="evidence" value="ECO:0007669"/>
    <property type="project" value="UniProtKB-SubCell"/>
</dbReference>
<dbReference type="GO" id="GO:0005198">
    <property type="term" value="F:structural molecule activity"/>
    <property type="evidence" value="ECO:0007669"/>
    <property type="project" value="InterPro"/>
</dbReference>
<dbReference type="Gene3D" id="6.10.280.190">
    <property type="match status" value="1"/>
</dbReference>
<dbReference type="Gene3D" id="2.30.220.10">
    <property type="entry name" value="f41 fragment of flagellin, C-terminal domain"/>
    <property type="match status" value="1"/>
</dbReference>
<dbReference type="Gene3D" id="2.170.280.10">
    <property type="entry name" value="f41 fragment of flagellin, middle domain"/>
    <property type="match status" value="1"/>
</dbReference>
<dbReference type="Gene3D" id="1.20.1330.10">
    <property type="entry name" value="f41 fragment of flagellin, N-terminal domain"/>
    <property type="match status" value="1"/>
</dbReference>
<dbReference type="Gene3D" id="6.10.10.10">
    <property type="entry name" value="Flagellar export chaperone, C-terminal domain"/>
    <property type="match status" value="1"/>
</dbReference>
<dbReference type="InterPro" id="IPR001492">
    <property type="entry name" value="Flagellin"/>
</dbReference>
<dbReference type="InterPro" id="IPR046358">
    <property type="entry name" value="Flagellin_C"/>
</dbReference>
<dbReference type="InterPro" id="IPR042187">
    <property type="entry name" value="Flagellin_C_sub2"/>
</dbReference>
<dbReference type="InterPro" id="IPR001029">
    <property type="entry name" value="Flagellin_N"/>
</dbReference>
<dbReference type="PANTHER" id="PTHR42792">
    <property type="entry name" value="FLAGELLIN"/>
    <property type="match status" value="1"/>
</dbReference>
<dbReference type="PANTHER" id="PTHR42792:SF2">
    <property type="entry name" value="FLAGELLIN"/>
    <property type="match status" value="1"/>
</dbReference>
<dbReference type="Pfam" id="PF00700">
    <property type="entry name" value="Flagellin_C"/>
    <property type="match status" value="1"/>
</dbReference>
<dbReference type="Pfam" id="PF00669">
    <property type="entry name" value="Flagellin_N"/>
    <property type="match status" value="1"/>
</dbReference>
<dbReference type="Pfam" id="PF22370">
    <property type="entry name" value="FliC-like_3rd"/>
    <property type="match status" value="1"/>
</dbReference>
<dbReference type="PRINTS" id="PR00207">
    <property type="entry name" value="FLAGELLIN"/>
</dbReference>
<dbReference type="SUPFAM" id="SSF64518">
    <property type="entry name" value="Phase 1 flagellin"/>
    <property type="match status" value="1"/>
</dbReference>
<name>FLIC_SALMO</name>
<gene>
    <name type="primary">fliC</name>
</gene>
<evidence type="ECO:0000250" key="1"/>
<evidence type="ECO:0000305" key="2"/>